<feature type="chain" id="PRO_0000093378" description="Protein scarlet">
    <location>
        <begin position="1"/>
        <end position="666"/>
    </location>
</feature>
<feature type="topological domain" description="Cytoplasmic" evidence="12">
    <location>
        <begin position="1"/>
        <end position="417"/>
    </location>
</feature>
<feature type="transmembrane region" description="Helical" evidence="1">
    <location>
        <begin position="418"/>
        <end position="438"/>
    </location>
</feature>
<feature type="topological domain" description="Extracellular" evidence="12">
    <location>
        <begin position="439"/>
        <end position="444"/>
    </location>
</feature>
<feature type="transmembrane region" description="Helical" evidence="1">
    <location>
        <begin position="445"/>
        <end position="465"/>
    </location>
</feature>
<feature type="topological domain" description="Cytoplasmic" evidence="12">
    <location>
        <begin position="466"/>
        <end position="490"/>
    </location>
</feature>
<feature type="transmembrane region" description="Helical" evidence="1">
    <location>
        <begin position="491"/>
        <end position="511"/>
    </location>
</feature>
<feature type="topological domain" description="Extracellular" evidence="12">
    <location>
        <begin position="512"/>
        <end position="518"/>
    </location>
</feature>
<feature type="transmembrane region" description="Helical" evidence="1">
    <location>
        <begin position="519"/>
        <end position="539"/>
    </location>
</feature>
<feature type="topological domain" description="Cytoplasmic" evidence="12">
    <location>
        <begin position="540"/>
        <end position="551"/>
    </location>
</feature>
<feature type="transmembrane region" description="Helical" evidence="1">
    <location>
        <begin position="552"/>
        <end position="572"/>
    </location>
</feature>
<feature type="topological domain" description="Extracellular" evidence="12">
    <location>
        <begin position="573"/>
        <end position="639"/>
    </location>
</feature>
<feature type="transmembrane region" description="Helical" evidence="1">
    <location>
        <begin position="640"/>
        <end position="660"/>
    </location>
</feature>
<feature type="topological domain" description="Cytoplasmic" evidence="12">
    <location>
        <begin position="661"/>
        <end position="666"/>
    </location>
</feature>
<feature type="domain" description="ABC transporter" evidence="2">
    <location>
        <begin position="69"/>
        <end position="316"/>
    </location>
</feature>
<feature type="region of interest" description="Disordered" evidence="4">
    <location>
        <begin position="26"/>
        <end position="55"/>
    </location>
</feature>
<feature type="binding site" evidence="2">
    <location>
        <begin position="108"/>
        <end position="115"/>
    </location>
    <ligand>
        <name>ATP</name>
        <dbReference type="ChEBI" id="CHEBI:30616"/>
    </ligand>
</feature>
<feature type="glycosylation site" description="N-linked (GlcNAc...) asparagine" evidence="3">
    <location>
        <position position="607"/>
    </location>
</feature>
<feature type="glycosylation site" description="N-linked (GlcNAc...) asparagine" evidence="3">
    <location>
        <position position="633"/>
    </location>
</feature>
<feature type="sequence conflict" description="In Ref. 4; AAQ23526." evidence="12" ref="4">
    <original>P</original>
    <variation>T</variation>
    <location>
        <position position="126"/>
    </location>
</feature>
<feature type="sequence conflict" description="In Ref. 1; AAA82056." evidence="12" ref="1">
    <original>IS</original>
    <variation>NH</variation>
    <location>
        <begin position="149"/>
        <end position="150"/>
    </location>
</feature>
<feature type="sequence conflict" description="In Ref. 1; AAA82056." evidence="12" ref="1">
    <original>LT</original>
    <variation>VS</variation>
    <location>
        <begin position="163"/>
        <end position="164"/>
    </location>
</feature>
<feature type="sequence conflict" description="In Ref. 4; AAQ23526." evidence="12" ref="4">
    <original>Y</original>
    <variation>N</variation>
    <location>
        <position position="249"/>
    </location>
</feature>
<feature type="sequence conflict" description="In Ref. 4; AAQ23526." evidence="12" ref="4">
    <original>F</original>
    <variation>Y</variation>
    <location>
        <position position="323"/>
    </location>
</feature>
<feature type="sequence conflict" description="In Ref. 1; AAA82056." evidence="12" ref="1">
    <original>SL</original>
    <variation>IV</variation>
    <location>
        <begin position="400"/>
        <end position="401"/>
    </location>
</feature>
<feature type="sequence conflict" description="In Ref. 1; AAA82056." evidence="12" ref="1">
    <original>S</original>
    <variation>T</variation>
    <location>
        <position position="631"/>
    </location>
</feature>
<gene>
    <name evidence="14" type="primary">st</name>
    <name evidence="14" type="ORF">CG4314</name>
</gene>
<name>SCRT_DROME</name>
<accession>P45843</accession>
<accession>Q6NP00</accession>
<accession>Q6NR69</accession>
<accession>Q9VV67</accession>
<comment type="function">
    <text evidence="5 7 9 10 11">ATP-dependent transporter of the ATP-binding cassette (ABC) family which transports various molecules including bioamines, neurotransmitters and metabolic intermediates (PubMed:18931318, PubMed:33820991, PubMed:812484). In the eye and probably in association with w/white, required for the transport of the eye brown pigment precursors, kynurenine and probably tryptophan, into pigment cell granules (PubMed:10407069, PubMed:812484). In Malpighian tubules and pupal eyes, involved in kynurenine transport (PubMed:812484). Probably in association with w/white, plays a role in zinc storage granule biogenesis in Malpighian tubule principal epithelial cells (PubMed:29367274).</text>
</comment>
<comment type="catalytic activity">
    <reaction evidence="10 11">
        <text>L-kynurenine(out) + ATP + H2O = L-kynurenine(in) + ADP + phosphate + H(+)</text>
        <dbReference type="Rhea" id="RHEA:68580"/>
        <dbReference type="ChEBI" id="CHEBI:15377"/>
        <dbReference type="ChEBI" id="CHEBI:15378"/>
        <dbReference type="ChEBI" id="CHEBI:30616"/>
        <dbReference type="ChEBI" id="CHEBI:43474"/>
        <dbReference type="ChEBI" id="CHEBI:57959"/>
        <dbReference type="ChEBI" id="CHEBI:456216"/>
    </reaction>
</comment>
<comment type="subunit">
    <text evidence="13">May form a heterodimer with w/white.</text>
</comment>
<comment type="subcellular location">
    <subcellularLocation>
        <location evidence="6">Cytoplasmic vesicle membrane</location>
        <topology evidence="6">Multi-pass membrane protein</topology>
    </subcellularLocation>
    <text evidence="6">Co-localizes with w/white to pigment granules within pigment cells and retinula cells of the compound eye.</text>
</comment>
<comment type="tissue specificity">
    <text evidence="6">Expressed in the eye, specifically in primary pigment cells, secondary pigment cells and retinula cells (at protein level).</text>
</comment>
<comment type="developmental stage">
    <text evidence="8">Expressed in early and late larvae, in pupae and, to a lesser extent, in adults.</text>
</comment>
<comment type="disruption phenotype">
    <text evidence="5 7 9 10 11">Eyes are scarlet due to a defect in brown pigment production (PubMed:10407069). In larval Malpighian tubules and pupal eyes, kynurenine uptake is impaired resulting in a severe decrease in 3-hydroxykynurenine production (PubMed:812484). In the head, levels of neurotransmitters histamine, dopamine and serotonin are reduced (PubMed:18931318). In addition, in lamina photoreceptor terminals R1-R6, numbers of synaptic vesicles and capitate projections, which are sites of endocytosis of vesicle membrane, are reduced (PubMed:18931318). Reduces the levels of several metabolites, including tryptophan, kynurenine, 3-hydroxykynurenine, guanosine, and, to a lesser extent, xanthine and riboflavin, and increases the levels of guanine and tetrahydrofolate (PubMed:33820991). 3-fold reduction in Malpighian tubule zinc stores (PubMed:29367274).</text>
</comment>
<comment type="similarity">
    <text evidence="12">Belongs to the ABC transporter superfamily. ABCG family. Eye pigment precursor importer (TC 3.A.1.204) subfamily.</text>
</comment>
<proteinExistence type="evidence at protein level"/>
<reference key="1">
    <citation type="journal article" date="1995" name="Mol. Gen. Genet.">
        <title>Molecular characterization of spontaneous mutations at the scarlet locus of Drosophila melanogaster.</title>
        <authorList>
            <person name="ten Have J.F."/>
            <person name="Green M.M."/>
            <person name="Howells A.J."/>
        </authorList>
    </citation>
    <scope>NUCLEOTIDE SEQUENCE [GENOMIC DNA]</scope>
    <source>
        <strain>Canton-S</strain>
    </source>
</reference>
<reference key="2">
    <citation type="journal article" date="2000" name="Science">
        <title>The genome sequence of Drosophila melanogaster.</title>
        <authorList>
            <person name="Adams M.D."/>
            <person name="Celniker S.E."/>
            <person name="Holt R.A."/>
            <person name="Evans C.A."/>
            <person name="Gocayne J.D."/>
            <person name="Amanatides P.G."/>
            <person name="Scherer S.E."/>
            <person name="Li P.W."/>
            <person name="Hoskins R.A."/>
            <person name="Galle R.F."/>
            <person name="George R.A."/>
            <person name="Lewis S.E."/>
            <person name="Richards S."/>
            <person name="Ashburner M."/>
            <person name="Henderson S.N."/>
            <person name="Sutton G.G."/>
            <person name="Wortman J.R."/>
            <person name="Yandell M.D."/>
            <person name="Zhang Q."/>
            <person name="Chen L.X."/>
            <person name="Brandon R.C."/>
            <person name="Rogers Y.-H.C."/>
            <person name="Blazej R.G."/>
            <person name="Champe M."/>
            <person name="Pfeiffer B.D."/>
            <person name="Wan K.H."/>
            <person name="Doyle C."/>
            <person name="Baxter E.G."/>
            <person name="Helt G."/>
            <person name="Nelson C.R."/>
            <person name="Miklos G.L.G."/>
            <person name="Abril J.F."/>
            <person name="Agbayani A."/>
            <person name="An H.-J."/>
            <person name="Andrews-Pfannkoch C."/>
            <person name="Baldwin D."/>
            <person name="Ballew R.M."/>
            <person name="Basu A."/>
            <person name="Baxendale J."/>
            <person name="Bayraktaroglu L."/>
            <person name="Beasley E.M."/>
            <person name="Beeson K.Y."/>
            <person name="Benos P.V."/>
            <person name="Berman B.P."/>
            <person name="Bhandari D."/>
            <person name="Bolshakov S."/>
            <person name="Borkova D."/>
            <person name="Botchan M.R."/>
            <person name="Bouck J."/>
            <person name="Brokstein P."/>
            <person name="Brottier P."/>
            <person name="Burtis K.C."/>
            <person name="Busam D.A."/>
            <person name="Butler H."/>
            <person name="Cadieu E."/>
            <person name="Center A."/>
            <person name="Chandra I."/>
            <person name="Cherry J.M."/>
            <person name="Cawley S."/>
            <person name="Dahlke C."/>
            <person name="Davenport L.B."/>
            <person name="Davies P."/>
            <person name="de Pablos B."/>
            <person name="Delcher A."/>
            <person name="Deng Z."/>
            <person name="Mays A.D."/>
            <person name="Dew I."/>
            <person name="Dietz S.M."/>
            <person name="Dodson K."/>
            <person name="Doup L.E."/>
            <person name="Downes M."/>
            <person name="Dugan-Rocha S."/>
            <person name="Dunkov B.C."/>
            <person name="Dunn P."/>
            <person name="Durbin K.J."/>
            <person name="Evangelista C.C."/>
            <person name="Ferraz C."/>
            <person name="Ferriera S."/>
            <person name="Fleischmann W."/>
            <person name="Fosler C."/>
            <person name="Gabrielian A.E."/>
            <person name="Garg N.S."/>
            <person name="Gelbart W.M."/>
            <person name="Glasser K."/>
            <person name="Glodek A."/>
            <person name="Gong F."/>
            <person name="Gorrell J.H."/>
            <person name="Gu Z."/>
            <person name="Guan P."/>
            <person name="Harris M."/>
            <person name="Harris N.L."/>
            <person name="Harvey D.A."/>
            <person name="Heiman T.J."/>
            <person name="Hernandez J.R."/>
            <person name="Houck J."/>
            <person name="Hostin D."/>
            <person name="Houston K.A."/>
            <person name="Howland T.J."/>
            <person name="Wei M.-H."/>
            <person name="Ibegwam C."/>
            <person name="Jalali M."/>
            <person name="Kalush F."/>
            <person name="Karpen G.H."/>
            <person name="Ke Z."/>
            <person name="Kennison J.A."/>
            <person name="Ketchum K.A."/>
            <person name="Kimmel B.E."/>
            <person name="Kodira C.D."/>
            <person name="Kraft C.L."/>
            <person name="Kravitz S."/>
            <person name="Kulp D."/>
            <person name="Lai Z."/>
            <person name="Lasko P."/>
            <person name="Lei Y."/>
            <person name="Levitsky A.A."/>
            <person name="Li J.H."/>
            <person name="Li Z."/>
            <person name="Liang Y."/>
            <person name="Lin X."/>
            <person name="Liu X."/>
            <person name="Mattei B."/>
            <person name="McIntosh T.C."/>
            <person name="McLeod M.P."/>
            <person name="McPherson D."/>
            <person name="Merkulov G."/>
            <person name="Milshina N.V."/>
            <person name="Mobarry C."/>
            <person name="Morris J."/>
            <person name="Moshrefi A."/>
            <person name="Mount S.M."/>
            <person name="Moy M."/>
            <person name="Murphy B."/>
            <person name="Murphy L."/>
            <person name="Muzny D.M."/>
            <person name="Nelson D.L."/>
            <person name="Nelson D.R."/>
            <person name="Nelson K.A."/>
            <person name="Nixon K."/>
            <person name="Nusskern D.R."/>
            <person name="Pacleb J.M."/>
            <person name="Palazzolo M."/>
            <person name="Pittman G.S."/>
            <person name="Pan S."/>
            <person name="Pollard J."/>
            <person name="Puri V."/>
            <person name="Reese M.G."/>
            <person name="Reinert K."/>
            <person name="Remington K."/>
            <person name="Saunders R.D.C."/>
            <person name="Scheeler F."/>
            <person name="Shen H."/>
            <person name="Shue B.C."/>
            <person name="Siden-Kiamos I."/>
            <person name="Simpson M."/>
            <person name="Skupski M.P."/>
            <person name="Smith T.J."/>
            <person name="Spier E."/>
            <person name="Spradling A.C."/>
            <person name="Stapleton M."/>
            <person name="Strong R."/>
            <person name="Sun E."/>
            <person name="Svirskas R."/>
            <person name="Tector C."/>
            <person name="Turner R."/>
            <person name="Venter E."/>
            <person name="Wang A.H."/>
            <person name="Wang X."/>
            <person name="Wang Z.-Y."/>
            <person name="Wassarman D.A."/>
            <person name="Weinstock G.M."/>
            <person name="Weissenbach J."/>
            <person name="Williams S.M."/>
            <person name="Woodage T."/>
            <person name="Worley K.C."/>
            <person name="Wu D."/>
            <person name="Yang S."/>
            <person name="Yao Q.A."/>
            <person name="Ye J."/>
            <person name="Yeh R.-F."/>
            <person name="Zaveri J.S."/>
            <person name="Zhan M."/>
            <person name="Zhang G."/>
            <person name="Zhao Q."/>
            <person name="Zheng L."/>
            <person name="Zheng X.H."/>
            <person name="Zhong F.N."/>
            <person name="Zhong W."/>
            <person name="Zhou X."/>
            <person name="Zhu S.C."/>
            <person name="Zhu X."/>
            <person name="Smith H.O."/>
            <person name="Gibbs R.A."/>
            <person name="Myers E.W."/>
            <person name="Rubin G.M."/>
            <person name="Venter J.C."/>
        </authorList>
    </citation>
    <scope>NUCLEOTIDE SEQUENCE [LARGE SCALE GENOMIC DNA]</scope>
    <source>
        <strain>Berkeley</strain>
    </source>
</reference>
<reference key="3">
    <citation type="journal article" date="2002" name="Genome Biol.">
        <title>Annotation of the Drosophila melanogaster euchromatic genome: a systematic review.</title>
        <authorList>
            <person name="Misra S."/>
            <person name="Crosby M.A."/>
            <person name="Mungall C.J."/>
            <person name="Matthews B.B."/>
            <person name="Campbell K.S."/>
            <person name="Hradecky P."/>
            <person name="Huang Y."/>
            <person name="Kaminker J.S."/>
            <person name="Millburn G.H."/>
            <person name="Prochnik S.E."/>
            <person name="Smith C.D."/>
            <person name="Tupy J.L."/>
            <person name="Whitfield E.J."/>
            <person name="Bayraktaroglu L."/>
            <person name="Berman B.P."/>
            <person name="Bettencourt B.R."/>
            <person name="Celniker S.E."/>
            <person name="de Grey A.D.N.J."/>
            <person name="Drysdale R.A."/>
            <person name="Harris N.L."/>
            <person name="Richter J."/>
            <person name="Russo S."/>
            <person name="Schroeder A.J."/>
            <person name="Shu S.Q."/>
            <person name="Stapleton M."/>
            <person name="Yamada C."/>
            <person name="Ashburner M."/>
            <person name="Gelbart W.M."/>
            <person name="Rubin G.M."/>
            <person name="Lewis S.E."/>
        </authorList>
    </citation>
    <scope>GENOME REANNOTATION</scope>
    <source>
        <strain>Berkeley</strain>
    </source>
</reference>
<reference key="4">
    <citation type="submission" date="2003-12" db="EMBL/GenBank/DDBJ databases">
        <authorList>
            <person name="Stapleton M."/>
            <person name="Brokstein P."/>
            <person name="Hong L."/>
            <person name="Agbayani A."/>
            <person name="Carlson J.W."/>
            <person name="Champe M."/>
            <person name="Chavez C."/>
            <person name="Dorsett V."/>
            <person name="Dresnek D."/>
            <person name="Farfan D."/>
            <person name="Frise E."/>
            <person name="George R.A."/>
            <person name="Gonzalez M."/>
            <person name="Guarin H."/>
            <person name="Kronmiller B."/>
            <person name="Li P.W."/>
            <person name="Liao G."/>
            <person name="Miranda A."/>
            <person name="Mungall C.J."/>
            <person name="Nunoo J."/>
            <person name="Pacleb J.M."/>
            <person name="Paragas V."/>
            <person name="Park S."/>
            <person name="Patel S."/>
            <person name="Phouanenavong S."/>
            <person name="Wan K.H."/>
            <person name="Yu C."/>
            <person name="Lewis S.E."/>
            <person name="Rubin G.M."/>
            <person name="Celniker S.E."/>
        </authorList>
    </citation>
    <scope>NUCLEOTIDE SEQUENCE [LARGE SCALE MRNA]</scope>
    <source>
        <strain>Berkeley</strain>
        <tissue>Head</tissue>
    </source>
</reference>
<reference key="5">
    <citation type="journal article" date="1989" name="Genetics">
        <title>Cloning and characterization of the scarlet gene of Drosophila melanogaster.</title>
        <authorList>
            <person name="Tearle R.G."/>
            <person name="Belote J.M."/>
            <person name="McKeown M."/>
            <person name="Baker B.S."/>
            <person name="Howells A.J."/>
        </authorList>
    </citation>
    <scope>NUCLEOTIDE SEQUENCE [GENOMIC DNA] OF 200-306</scope>
    <scope>DEVELOPMENTAL STAGE</scope>
</reference>
<reference key="6">
    <citation type="journal article" date="1975" name="Biochem. Genet.">
        <title>Transport defects as the physiological basis for eye color mutants of Drosophila melanogaster.</title>
        <authorList>
            <person name="Sullivan D.T."/>
            <person name="Sullivan M.C."/>
        </authorList>
    </citation>
    <scope>FUNCTION</scope>
    <scope>CATALYTIC ACTIVITY</scope>
    <scope>DISRUPTION PHENOTYPE</scope>
</reference>
<reference key="7">
    <citation type="journal article" date="1999" name="Biochim. Biophys. Acta">
        <title>Mutations in the white gene of Drosophila melanogaster affecting ABC transporters that determine eye colouration.</title>
        <authorList>
            <person name="Mackenzie S.M."/>
            <person name="Brooker M.R."/>
            <person name="Gill T.R."/>
            <person name="Cox G.B."/>
            <person name="Howells A.J."/>
            <person name="Ewart G.D."/>
        </authorList>
    </citation>
    <scope>FUNCTION</scope>
    <scope>DISRUPTION PHENOTYPE</scope>
</reference>
<reference key="8">
    <citation type="journal article" date="2000" name="Genetica">
        <title>Sub-cellular localisation of the white/scarlet ABC transporter to pigment granule membranes within the compound eye of Drosophila melanogaster.</title>
        <authorList>
            <person name="Mackenzie S.M."/>
            <person name="Howells A.J."/>
            <person name="Cox G.B."/>
            <person name="Ewart G.D."/>
        </authorList>
    </citation>
    <scope>SUBUNIT</scope>
    <scope>SUBCELLULAR LOCATION</scope>
    <scope>TISSUE SPECIFICITY</scope>
</reference>
<reference key="9">
    <citation type="journal article" date="2008" name="J. Exp. Biol.">
        <title>Drosophila ABC transporter mutants white, brown and scarlet have altered contents and distribution of biogenic amines in the brain.</title>
        <authorList>
            <person name="Borycz J."/>
            <person name="Borycz J.A."/>
            <person name="Kubow A."/>
            <person name="Lloyd V."/>
            <person name="Meinertzhagen I.A."/>
        </authorList>
    </citation>
    <scope>FUNCTION</scope>
    <scope>DISRUPTION PHENOTYPE</scope>
</reference>
<reference key="10">
    <citation type="journal article" date="2018" name="J. Exp. Biol.">
        <title>Biogenesis of zinc storage granules in Drosophila melanogaster.</title>
        <authorList>
            <person name="Tejeda-Guzman C."/>
            <person name="Rosas-Arellano A."/>
            <person name="Kroll T."/>
            <person name="Webb S.M."/>
            <person name="Barajas-Aceves M."/>
            <person name="Osorio B."/>
            <person name="Missirlis F."/>
        </authorList>
    </citation>
    <scope>FUNCTION</scope>
    <scope>DISRUPTION PHENOTYPE</scope>
</reference>
<reference key="11">
    <citation type="journal article" date="2021" name="Nat. Metab.">
        <title>white regulates proliferative homeostasis of intestinal stem cells during ageing in Drosophila.</title>
        <authorList>
            <person name="Sasaki A."/>
            <person name="Nishimura T."/>
            <person name="Takano T."/>
            <person name="Naito S."/>
            <person name="Yoo S.K."/>
        </authorList>
    </citation>
    <scope>FUNCTION</scope>
    <scope>CATALYTIC ACTIVITY</scope>
    <scope>DISRUPTION PHENOTYPE</scope>
</reference>
<keyword id="KW-0067">ATP-binding</keyword>
<keyword id="KW-0968">Cytoplasmic vesicle</keyword>
<keyword id="KW-0325">Glycoprotein</keyword>
<keyword id="KW-0472">Membrane</keyword>
<keyword id="KW-0547">Nucleotide-binding</keyword>
<keyword id="KW-0608">Pigment</keyword>
<keyword id="KW-1185">Reference proteome</keyword>
<keyword id="KW-1278">Translocase</keyword>
<keyword id="KW-0812">Transmembrane</keyword>
<keyword id="KW-1133">Transmembrane helix</keyword>
<keyword id="KW-0813">Transport</keyword>
<evidence type="ECO:0000255" key="1"/>
<evidence type="ECO:0000255" key="2">
    <source>
        <dbReference type="PROSITE-ProRule" id="PRU00434"/>
    </source>
</evidence>
<evidence type="ECO:0000255" key="3">
    <source>
        <dbReference type="PROSITE-ProRule" id="PRU00498"/>
    </source>
</evidence>
<evidence type="ECO:0000256" key="4">
    <source>
        <dbReference type="SAM" id="MobiDB-lite"/>
    </source>
</evidence>
<evidence type="ECO:0000269" key="5">
    <source>
    </source>
</evidence>
<evidence type="ECO:0000269" key="6">
    <source>
    </source>
</evidence>
<evidence type="ECO:0000269" key="7">
    <source>
    </source>
</evidence>
<evidence type="ECO:0000269" key="8">
    <source>
    </source>
</evidence>
<evidence type="ECO:0000269" key="9">
    <source>
    </source>
</evidence>
<evidence type="ECO:0000269" key="10">
    <source>
    </source>
</evidence>
<evidence type="ECO:0000269" key="11">
    <source>
    </source>
</evidence>
<evidence type="ECO:0000305" key="12"/>
<evidence type="ECO:0000305" key="13">
    <source>
    </source>
</evidence>
<evidence type="ECO:0000312" key="14">
    <source>
        <dbReference type="FlyBase" id="FBgn0003515"/>
    </source>
</evidence>
<organism>
    <name type="scientific">Drosophila melanogaster</name>
    <name type="common">Fruit fly</name>
    <dbReference type="NCBI Taxonomy" id="7227"/>
    <lineage>
        <taxon>Eukaryota</taxon>
        <taxon>Metazoa</taxon>
        <taxon>Ecdysozoa</taxon>
        <taxon>Arthropoda</taxon>
        <taxon>Hexapoda</taxon>
        <taxon>Insecta</taxon>
        <taxon>Pterygota</taxon>
        <taxon>Neoptera</taxon>
        <taxon>Endopterygota</taxon>
        <taxon>Diptera</taxon>
        <taxon>Brachycera</taxon>
        <taxon>Muscomorpha</taxon>
        <taxon>Ephydroidea</taxon>
        <taxon>Drosophilidae</taxon>
        <taxon>Drosophila</taxon>
        <taxon>Sophophora</taxon>
    </lineage>
</organism>
<sequence length="666" mass="74458">MSDSDSKRIDVEAPERVEQHELQVMPVGSTIEVPSLDSTPKLSKRNSSERSLPLRSYSKWSPTEQGATLVWRDLCVYTNVGGSGQRMKRIINNSTGAIQPGTLMALMGSSGSGKTTLMSTLAFRQPAGTVVQGDILINGRRIGPFMHRISGYVYQDDLFLGSLTVLEHLNFMAHLRLDRRVSKEERRLIIKELLERTGLLSAAQTRIGSGDDKKVLSGGERKRLAFAVELLNNPVILFCDEPTTGLDSYSAQQLVATLYELAQKGTTILCTIHQPSSQLFDNFNNVMLLADGRVAFTGSPQHALSFFANHGYYCPEAYNPADFLIGVLATDPGYEQASQRSAQHLCDQFAVSSAAKQRDMLVNLEIHMAQSGNFPFDTEVESFRGVAWYKRFHVVWLRASLTLLRDPTIQWLRFIQKIAMAFIIGACFAGTTEPSQLGVQAVQGALFIMISENTYHPMYSVLNLFPQGFPLFMRETRSGLYSTGQYYAANILALLPGMIIEPLIFVIICYWLTGLRSTFYAFGVTAMCVVLVMNVATACGCFFSTAFNSVPLAMAYLVPLDYIFMITSGIFIQVNSLPVAFWWTQFLSWMLYANEAMTAAQWSGVQNITCFQESADLPCFHTGQDVLDKYSFNESNVYRNLLAMVGLYFGFHLLGYYCLWRRARKL</sequence>
<protein>
    <recommendedName>
        <fullName>Protein scarlet</fullName>
        <ecNumber evidence="10 11">7.6.2.-</ecNumber>
    </recommendedName>
    <alternativeName>
        <fullName evidence="12">ATP-binding cassette transporter sub-family G member scarlet</fullName>
    </alternativeName>
    <alternativeName>
        <fullName evidence="12">Broad substrate specificity ATP-binding cassette transporter scarlet</fullName>
    </alternativeName>
</protein>
<dbReference type="EC" id="7.6.2.-" evidence="10 11"/>
<dbReference type="EMBL" id="U39739">
    <property type="protein sequence ID" value="AAA82056.1"/>
    <property type="molecule type" value="Genomic_DNA"/>
</dbReference>
<dbReference type="EMBL" id="AE014296">
    <property type="protein sequence ID" value="AAF49455.1"/>
    <property type="molecule type" value="Genomic_DNA"/>
</dbReference>
<dbReference type="EMBL" id="BT010208">
    <property type="protein sequence ID" value="AAQ23526.1"/>
    <property type="molecule type" value="mRNA"/>
</dbReference>
<dbReference type="EMBL" id="BT011131">
    <property type="protein sequence ID" value="AAR82798.1"/>
    <property type="molecule type" value="mRNA"/>
</dbReference>
<dbReference type="EMBL" id="X76201">
    <property type="protein sequence ID" value="CAA53794.1"/>
    <property type="molecule type" value="Genomic_DNA"/>
</dbReference>
<dbReference type="RefSeq" id="NP_524108.1">
    <property type="nucleotide sequence ID" value="NM_079384.5"/>
</dbReference>
<dbReference type="SMR" id="P45843"/>
<dbReference type="BioGRID" id="65140">
    <property type="interactions" value="4"/>
</dbReference>
<dbReference type="FunCoup" id="P45843">
    <property type="interactions" value="1"/>
</dbReference>
<dbReference type="IntAct" id="P45843">
    <property type="interactions" value="2"/>
</dbReference>
<dbReference type="STRING" id="7227.FBpp0075149"/>
<dbReference type="TCDB" id="3.A.1.204.17">
    <property type="family name" value="the atp-binding cassette (abc) superfamily"/>
</dbReference>
<dbReference type="GlyCosmos" id="P45843">
    <property type="glycosylation" value="2 sites, No reported glycans"/>
</dbReference>
<dbReference type="GlyGen" id="P45843">
    <property type="glycosylation" value="2 sites"/>
</dbReference>
<dbReference type="PaxDb" id="7227-FBpp0075149"/>
<dbReference type="DNASU" id="39836"/>
<dbReference type="EnsemblMetazoa" id="FBtr0075391">
    <property type="protein sequence ID" value="FBpp0075149"/>
    <property type="gene ID" value="FBgn0003515"/>
</dbReference>
<dbReference type="GeneID" id="39836"/>
<dbReference type="KEGG" id="dme:Dmel_CG4314"/>
<dbReference type="UCSC" id="CG4314-RA">
    <property type="organism name" value="d. melanogaster"/>
</dbReference>
<dbReference type="AGR" id="FB:FBgn0003515"/>
<dbReference type="CTD" id="20837"/>
<dbReference type="FlyBase" id="FBgn0003515">
    <property type="gene designation" value="st"/>
</dbReference>
<dbReference type="VEuPathDB" id="VectorBase:FBgn0003515"/>
<dbReference type="eggNOG" id="KOG0061">
    <property type="taxonomic scope" value="Eukaryota"/>
</dbReference>
<dbReference type="HOGENOM" id="CLU_000604_57_6_1"/>
<dbReference type="InParanoid" id="P45843"/>
<dbReference type="OMA" id="DYIIMIT"/>
<dbReference type="OrthoDB" id="66620at2759"/>
<dbReference type="PhylomeDB" id="P45843"/>
<dbReference type="BioGRID-ORCS" id="39836">
    <property type="hits" value="0 hits in 1 CRISPR screen"/>
</dbReference>
<dbReference type="GenomeRNAi" id="39836"/>
<dbReference type="PRO" id="PR:P45843"/>
<dbReference type="Proteomes" id="UP000000803">
    <property type="component" value="Chromosome 3L"/>
</dbReference>
<dbReference type="Bgee" id="FBgn0003515">
    <property type="expression patterns" value="Expressed in adult Malpighian tubule (Drosophila) and 22 other cell types or tissues"/>
</dbReference>
<dbReference type="ExpressionAtlas" id="P45843">
    <property type="expression patterns" value="baseline and differential"/>
</dbReference>
<dbReference type="GO" id="GO:0030659">
    <property type="term" value="C:cytoplasmic vesicle membrane"/>
    <property type="evidence" value="ECO:0000318"/>
    <property type="project" value="GO_Central"/>
</dbReference>
<dbReference type="GO" id="GO:0090741">
    <property type="term" value="C:pigment granule membrane"/>
    <property type="evidence" value="ECO:0000314"/>
    <property type="project" value="FlyBase"/>
</dbReference>
<dbReference type="GO" id="GO:0005886">
    <property type="term" value="C:plasma membrane"/>
    <property type="evidence" value="ECO:0000318"/>
    <property type="project" value="GO_Central"/>
</dbReference>
<dbReference type="GO" id="GO:0098793">
    <property type="term" value="C:presynapse"/>
    <property type="evidence" value="ECO:0007669"/>
    <property type="project" value="GOC"/>
</dbReference>
<dbReference type="GO" id="GO:0140359">
    <property type="term" value="F:ABC-type transporter activity"/>
    <property type="evidence" value="ECO:0007669"/>
    <property type="project" value="InterPro"/>
</dbReference>
<dbReference type="GO" id="GO:0005275">
    <property type="term" value="F:amine transmembrane transporter activity"/>
    <property type="evidence" value="ECO:0000315"/>
    <property type="project" value="FlyBase"/>
</dbReference>
<dbReference type="GO" id="GO:0005524">
    <property type="term" value="F:ATP binding"/>
    <property type="evidence" value="ECO:0007669"/>
    <property type="project" value="UniProtKB-KW"/>
</dbReference>
<dbReference type="GO" id="GO:0016887">
    <property type="term" value="F:ATP hydrolysis activity"/>
    <property type="evidence" value="ECO:0007669"/>
    <property type="project" value="InterPro"/>
</dbReference>
<dbReference type="GO" id="GO:0042626">
    <property type="term" value="F:ATPase-coupled transmembrane transporter activity"/>
    <property type="evidence" value="ECO:0000318"/>
    <property type="project" value="GO_Central"/>
</dbReference>
<dbReference type="GO" id="GO:0031409">
    <property type="term" value="F:pigment binding"/>
    <property type="evidence" value="ECO:0007669"/>
    <property type="project" value="UniProtKB-KW"/>
</dbReference>
<dbReference type="GO" id="GO:0022857">
    <property type="term" value="F:transmembrane transporter activity"/>
    <property type="evidence" value="ECO:0000315"/>
    <property type="project" value="UniProtKB"/>
</dbReference>
<dbReference type="GO" id="GO:0015842">
    <property type="term" value="P:aminergic neurotransmitter loading into synaptic vesicle"/>
    <property type="evidence" value="ECO:0000315"/>
    <property type="project" value="FlyBase"/>
</dbReference>
<dbReference type="GO" id="GO:0006856">
    <property type="term" value="P:eye pigment precursor transport"/>
    <property type="evidence" value="ECO:0000270"/>
    <property type="project" value="FlyBase"/>
</dbReference>
<dbReference type="GO" id="GO:0055085">
    <property type="term" value="P:transmembrane transport"/>
    <property type="evidence" value="ECO:0000315"/>
    <property type="project" value="UniProtKB"/>
</dbReference>
<dbReference type="CDD" id="cd03213">
    <property type="entry name" value="ABCG_EPDR"/>
    <property type="match status" value="1"/>
</dbReference>
<dbReference type="FunFam" id="3.40.50.300:FF:001581">
    <property type="entry name" value="Blast:Protein scarlet"/>
    <property type="match status" value="1"/>
</dbReference>
<dbReference type="Gene3D" id="3.40.50.300">
    <property type="entry name" value="P-loop containing nucleotide triphosphate hydrolases"/>
    <property type="match status" value="1"/>
</dbReference>
<dbReference type="InterPro" id="IPR003593">
    <property type="entry name" value="AAA+_ATPase"/>
</dbReference>
<dbReference type="InterPro" id="IPR013525">
    <property type="entry name" value="ABC2_TM"/>
</dbReference>
<dbReference type="InterPro" id="IPR003439">
    <property type="entry name" value="ABC_transporter-like_ATP-bd"/>
</dbReference>
<dbReference type="InterPro" id="IPR017871">
    <property type="entry name" value="ABC_transporter-like_CS"/>
</dbReference>
<dbReference type="InterPro" id="IPR043926">
    <property type="entry name" value="ABCG_dom"/>
</dbReference>
<dbReference type="InterPro" id="IPR050352">
    <property type="entry name" value="ABCG_transporters"/>
</dbReference>
<dbReference type="InterPro" id="IPR027417">
    <property type="entry name" value="P-loop_NTPase"/>
</dbReference>
<dbReference type="InterPro" id="IPR005284">
    <property type="entry name" value="Pigment_permease/Abcg"/>
</dbReference>
<dbReference type="NCBIfam" id="TIGR00955">
    <property type="entry name" value="3a01204"/>
    <property type="match status" value="1"/>
</dbReference>
<dbReference type="PANTHER" id="PTHR48041">
    <property type="entry name" value="ABC TRANSPORTER G FAMILY MEMBER 28"/>
    <property type="match status" value="1"/>
</dbReference>
<dbReference type="PANTHER" id="PTHR48041:SF139">
    <property type="entry name" value="PROTEIN SCARLET"/>
    <property type="match status" value="1"/>
</dbReference>
<dbReference type="Pfam" id="PF01061">
    <property type="entry name" value="ABC2_membrane"/>
    <property type="match status" value="1"/>
</dbReference>
<dbReference type="Pfam" id="PF19055">
    <property type="entry name" value="ABC2_membrane_7"/>
    <property type="match status" value="1"/>
</dbReference>
<dbReference type="Pfam" id="PF00005">
    <property type="entry name" value="ABC_tran"/>
    <property type="match status" value="1"/>
</dbReference>
<dbReference type="SMART" id="SM00382">
    <property type="entry name" value="AAA"/>
    <property type="match status" value="1"/>
</dbReference>
<dbReference type="SUPFAM" id="SSF52540">
    <property type="entry name" value="P-loop containing nucleoside triphosphate hydrolases"/>
    <property type="match status" value="1"/>
</dbReference>
<dbReference type="PROSITE" id="PS00211">
    <property type="entry name" value="ABC_TRANSPORTER_1"/>
    <property type="match status" value="1"/>
</dbReference>
<dbReference type="PROSITE" id="PS50893">
    <property type="entry name" value="ABC_TRANSPORTER_2"/>
    <property type="match status" value="1"/>
</dbReference>